<sequence>MPLEAQDAVYVALELALAALSVTGNVLVCAAVGTSSALQTPTNYFLVSLAAADVAVGLFAIPFAVTISLGFCTDFHSCLFLACFVLVLTQSSIFSLLAVAVDRYLAVRVPLRYKSLVTGARARGVIAALWVLAFGIGLTPFLGWNDRKIATNCTEPGDAATNVSCCLIRCLFENVVPMSYMVYFNFFGCVLPPLLIMLVIYVKIFLVACRQLQRTELMDHSRTVLQREIHAAKSLALIVGIFALCWLPVHTINCASLFQPTWAKVKPKWAINTAILLSHANSAVNPIVYAYRNRDFRYTFHKIISRYILCRTHILKSGEGQVGSQPTLQLGL</sequence>
<protein>
    <recommendedName>
        <fullName>Adenosine receptor A2b</fullName>
    </recommendedName>
</protein>
<keyword id="KW-1003">Cell membrane</keyword>
<keyword id="KW-1015">Disulfide bond</keyword>
<keyword id="KW-0297">G-protein coupled receptor</keyword>
<keyword id="KW-0325">Glycoprotein</keyword>
<keyword id="KW-0449">Lipoprotein</keyword>
<keyword id="KW-0472">Membrane</keyword>
<keyword id="KW-0564">Palmitate</keyword>
<keyword id="KW-0675">Receptor</keyword>
<keyword id="KW-1185">Reference proteome</keyword>
<keyword id="KW-0807">Transducer</keyword>
<keyword id="KW-0812">Transmembrane</keyword>
<keyword id="KW-1133">Transmembrane helix</keyword>
<organism>
    <name type="scientific">Bos taurus</name>
    <name type="common">Bovine</name>
    <dbReference type="NCBI Taxonomy" id="9913"/>
    <lineage>
        <taxon>Eukaryota</taxon>
        <taxon>Metazoa</taxon>
        <taxon>Chordata</taxon>
        <taxon>Craniata</taxon>
        <taxon>Vertebrata</taxon>
        <taxon>Euteleostomi</taxon>
        <taxon>Mammalia</taxon>
        <taxon>Eutheria</taxon>
        <taxon>Laurasiatheria</taxon>
        <taxon>Artiodactyla</taxon>
        <taxon>Ruminantia</taxon>
        <taxon>Pecora</taxon>
        <taxon>Bovidae</taxon>
        <taxon>Bovinae</taxon>
        <taxon>Bos</taxon>
    </lineage>
</organism>
<feature type="chain" id="PRO_0000269714" description="Adenosine receptor A2b">
    <location>
        <begin position="1"/>
        <end position="332"/>
    </location>
</feature>
<feature type="topological domain" description="Extracellular" evidence="1">
    <location>
        <begin position="1"/>
        <end position="8"/>
    </location>
</feature>
<feature type="transmembrane region" description="Helical; Name=1" evidence="1">
    <location>
        <begin position="9"/>
        <end position="33"/>
    </location>
</feature>
<feature type="topological domain" description="Cytoplasmic" evidence="1">
    <location>
        <begin position="34"/>
        <end position="43"/>
    </location>
</feature>
<feature type="transmembrane region" description="Helical; Name=2" evidence="1">
    <location>
        <begin position="44"/>
        <end position="67"/>
    </location>
</feature>
<feature type="topological domain" description="Extracellular" evidence="1">
    <location>
        <begin position="68"/>
        <end position="78"/>
    </location>
</feature>
<feature type="transmembrane region" description="Helical; Name=3" evidence="1">
    <location>
        <begin position="79"/>
        <end position="101"/>
    </location>
</feature>
<feature type="topological domain" description="Cytoplasmic" evidence="1">
    <location>
        <begin position="102"/>
        <end position="121"/>
    </location>
</feature>
<feature type="transmembrane region" description="Helical; Name=4" evidence="1">
    <location>
        <begin position="122"/>
        <end position="144"/>
    </location>
</feature>
<feature type="topological domain" description="Extracellular" evidence="1">
    <location>
        <begin position="145"/>
        <end position="177"/>
    </location>
</feature>
<feature type="transmembrane region" description="Helical; Name=5" evidence="1">
    <location>
        <begin position="178"/>
        <end position="202"/>
    </location>
</feature>
<feature type="topological domain" description="Cytoplasmic" evidence="1">
    <location>
        <begin position="203"/>
        <end position="234"/>
    </location>
</feature>
<feature type="transmembrane region" description="Helical; Name=6" evidence="1">
    <location>
        <begin position="235"/>
        <end position="258"/>
    </location>
</feature>
<feature type="topological domain" description="Extracellular" evidence="1">
    <location>
        <begin position="259"/>
        <end position="266"/>
    </location>
</feature>
<feature type="transmembrane region" description="Helical; Name=7" evidence="1">
    <location>
        <begin position="267"/>
        <end position="290"/>
    </location>
</feature>
<feature type="topological domain" description="Cytoplasmic" evidence="1">
    <location>
        <begin position="291"/>
        <end position="332"/>
    </location>
</feature>
<feature type="binding site" evidence="2">
    <location>
        <position position="173"/>
    </location>
    <ligand>
        <name>adenosine</name>
        <dbReference type="ChEBI" id="CHEBI:16335"/>
        <note>agonist</note>
    </ligand>
</feature>
<feature type="binding site" evidence="2">
    <location>
        <position position="253"/>
    </location>
    <ligand>
        <name>adenosine</name>
        <dbReference type="ChEBI" id="CHEBI:16335"/>
        <note>agonist</note>
    </ligand>
</feature>
<feature type="binding site" evidence="2">
    <location>
        <position position="278"/>
    </location>
    <ligand>
        <name>adenosine</name>
        <dbReference type="ChEBI" id="CHEBI:16335"/>
        <note>agonist</note>
    </ligand>
</feature>
<feature type="binding site" evidence="2">
    <location>
        <position position="279"/>
    </location>
    <ligand>
        <name>adenosine</name>
        <dbReference type="ChEBI" id="CHEBI:16335"/>
        <note>agonist</note>
    </ligand>
</feature>
<feature type="lipid moiety-binding region" description="S-palmitoyl cysteine" evidence="3">
    <location>
        <position position="310"/>
    </location>
</feature>
<feature type="glycosylation site" description="N-linked (GlcNAc...) asparagine" evidence="3">
    <location>
        <position position="152"/>
    </location>
</feature>
<feature type="glycosylation site" description="N-linked (GlcNAc...) asparagine" evidence="3">
    <location>
        <position position="162"/>
    </location>
</feature>
<feature type="disulfide bond" evidence="4">
    <location>
        <begin position="78"/>
        <end position="170"/>
    </location>
</feature>
<reference key="1">
    <citation type="submission" date="2006-05" db="EMBL/GenBank/DDBJ databases">
        <authorList>
            <consortium name="NIH - Mammalian Gene Collection (MGC) project"/>
        </authorList>
    </citation>
    <scope>NUCLEOTIDE SEQUENCE [LARGE SCALE MRNA]</scope>
    <source>
        <strain>Hereford</strain>
        <tissue>Ascending colon</tissue>
    </source>
</reference>
<dbReference type="EMBL" id="BC116078">
    <property type="protein sequence ID" value="AAI16079.1"/>
    <property type="molecule type" value="mRNA"/>
</dbReference>
<dbReference type="RefSeq" id="NP_001069393.1">
    <property type="nucleotide sequence ID" value="NM_001075925.1"/>
</dbReference>
<dbReference type="SMR" id="Q1LZD0"/>
<dbReference type="FunCoup" id="Q1LZD0">
    <property type="interactions" value="396"/>
</dbReference>
<dbReference type="STRING" id="9913.ENSBTAP00000009974"/>
<dbReference type="BindingDB" id="Q1LZD0"/>
<dbReference type="GlyCosmos" id="Q1LZD0">
    <property type="glycosylation" value="2 sites, No reported glycans"/>
</dbReference>
<dbReference type="GlyGen" id="Q1LZD0">
    <property type="glycosylation" value="2 sites"/>
</dbReference>
<dbReference type="PaxDb" id="9913-ENSBTAP00000009974"/>
<dbReference type="GeneID" id="529760"/>
<dbReference type="KEGG" id="bta:529760"/>
<dbReference type="CTD" id="136"/>
<dbReference type="VEuPathDB" id="HostDB:ENSBTAG00000007581"/>
<dbReference type="eggNOG" id="KOG3656">
    <property type="taxonomic scope" value="Eukaryota"/>
</dbReference>
<dbReference type="HOGENOM" id="CLU_009579_11_5_1"/>
<dbReference type="InParanoid" id="Q1LZD0"/>
<dbReference type="OMA" id="PVKCLFE"/>
<dbReference type="OrthoDB" id="9445642at2759"/>
<dbReference type="TreeFam" id="TF325296"/>
<dbReference type="Reactome" id="R-BTA-417973">
    <property type="pathway name" value="Adenosine P1 receptors"/>
</dbReference>
<dbReference type="Reactome" id="R-BTA-418555">
    <property type="pathway name" value="G alpha (s) signalling events"/>
</dbReference>
<dbReference type="Reactome" id="R-BTA-5683826">
    <property type="pathway name" value="Surfactant metabolism"/>
</dbReference>
<dbReference type="Proteomes" id="UP000009136">
    <property type="component" value="Chromosome 19"/>
</dbReference>
<dbReference type="Bgee" id="ENSBTAG00000007581">
    <property type="expression patterns" value="Expressed in monocyte and 99 other cell types or tissues"/>
</dbReference>
<dbReference type="GO" id="GO:0005886">
    <property type="term" value="C:plasma membrane"/>
    <property type="evidence" value="ECO:0000318"/>
    <property type="project" value="GO_Central"/>
</dbReference>
<dbReference type="GO" id="GO:0001609">
    <property type="term" value="F:G protein-coupled adenosine receptor activity"/>
    <property type="evidence" value="ECO:0007669"/>
    <property type="project" value="InterPro"/>
</dbReference>
<dbReference type="GO" id="GO:0004930">
    <property type="term" value="F:G protein-coupled receptor activity"/>
    <property type="evidence" value="ECO:0000318"/>
    <property type="project" value="GO_Central"/>
</dbReference>
<dbReference type="GO" id="GO:0007189">
    <property type="term" value="P:adenylate cyclase-activating G protein-coupled receptor signaling pathway"/>
    <property type="evidence" value="ECO:0000318"/>
    <property type="project" value="GO_Central"/>
</dbReference>
<dbReference type="GO" id="GO:0042311">
    <property type="term" value="P:vasodilation"/>
    <property type="evidence" value="ECO:0000318"/>
    <property type="project" value="GO_Central"/>
</dbReference>
<dbReference type="FunFam" id="1.20.1070.10:FF:000061">
    <property type="entry name" value="Adenosine receptor A2"/>
    <property type="match status" value="1"/>
</dbReference>
<dbReference type="Gene3D" id="1.20.1070.10">
    <property type="entry name" value="Rhodopsin 7-helix transmembrane proteins"/>
    <property type="match status" value="1"/>
</dbReference>
<dbReference type="InterPro" id="IPR001435">
    <property type="entry name" value="Adeno_A2B_rcpt"/>
</dbReference>
<dbReference type="InterPro" id="IPR001634">
    <property type="entry name" value="Adenosn_rcpt"/>
</dbReference>
<dbReference type="InterPro" id="IPR000276">
    <property type="entry name" value="GPCR_Rhodpsn"/>
</dbReference>
<dbReference type="InterPro" id="IPR017452">
    <property type="entry name" value="GPCR_Rhodpsn_7TM"/>
</dbReference>
<dbReference type="PANTHER" id="PTHR24246:SF18">
    <property type="entry name" value="ADENOSINE RECEPTOR A2B"/>
    <property type="match status" value="1"/>
</dbReference>
<dbReference type="PANTHER" id="PTHR24246">
    <property type="entry name" value="OLFACTORY RECEPTOR AND ADENOSINE RECEPTOR"/>
    <property type="match status" value="1"/>
</dbReference>
<dbReference type="Pfam" id="PF00001">
    <property type="entry name" value="7tm_1"/>
    <property type="match status" value="1"/>
</dbReference>
<dbReference type="PRINTS" id="PR00554">
    <property type="entry name" value="ADENOSINA2BR"/>
</dbReference>
<dbReference type="PRINTS" id="PR00424">
    <property type="entry name" value="ADENOSINER"/>
</dbReference>
<dbReference type="PRINTS" id="PR00237">
    <property type="entry name" value="GPCRRHODOPSN"/>
</dbReference>
<dbReference type="SMART" id="SM01381">
    <property type="entry name" value="7TM_GPCR_Srsx"/>
    <property type="match status" value="1"/>
</dbReference>
<dbReference type="SUPFAM" id="SSF81321">
    <property type="entry name" value="Family A G protein-coupled receptor-like"/>
    <property type="match status" value="1"/>
</dbReference>
<dbReference type="PROSITE" id="PS00237">
    <property type="entry name" value="G_PROTEIN_RECEP_F1_1"/>
    <property type="match status" value="1"/>
</dbReference>
<dbReference type="PROSITE" id="PS50262">
    <property type="entry name" value="G_PROTEIN_RECEP_F1_2"/>
    <property type="match status" value="1"/>
</dbReference>
<name>AA2BR_BOVIN</name>
<accession>Q1LZD0</accession>
<evidence type="ECO:0000250" key="1"/>
<evidence type="ECO:0000250" key="2">
    <source>
        <dbReference type="UniProtKB" id="P29274"/>
    </source>
</evidence>
<evidence type="ECO:0000255" key="3"/>
<evidence type="ECO:0000255" key="4">
    <source>
        <dbReference type="PROSITE-ProRule" id="PRU00521"/>
    </source>
</evidence>
<proteinExistence type="evidence at transcript level"/>
<comment type="function">
    <text evidence="1">Receptor for adenosine. The activity of this receptor is mediated by G proteins which activate adenylyl cyclase (By similarity).</text>
</comment>
<comment type="subcellular location">
    <subcellularLocation>
        <location>Cell membrane</location>
        <topology>Multi-pass membrane protein</topology>
    </subcellularLocation>
</comment>
<comment type="similarity">
    <text evidence="4">Belongs to the G-protein coupled receptor 1 family.</text>
</comment>
<gene>
    <name type="primary">ADORA2B</name>
</gene>